<reference key="1">
    <citation type="submission" date="2007-04" db="EMBL/GenBank/DDBJ databases">
        <title>Complete sequence of Roseiflexus sp. RS-1.</title>
        <authorList>
            <consortium name="US DOE Joint Genome Institute"/>
            <person name="Copeland A."/>
            <person name="Lucas S."/>
            <person name="Lapidus A."/>
            <person name="Barry K."/>
            <person name="Detter J.C."/>
            <person name="Glavina del Rio T."/>
            <person name="Hammon N."/>
            <person name="Israni S."/>
            <person name="Dalin E."/>
            <person name="Tice H."/>
            <person name="Pitluck S."/>
            <person name="Chertkov O."/>
            <person name="Brettin T."/>
            <person name="Bruce D."/>
            <person name="Han C."/>
            <person name="Schmutz J."/>
            <person name="Larimer F."/>
            <person name="Land M."/>
            <person name="Hauser L."/>
            <person name="Kyrpides N."/>
            <person name="Mikhailova N."/>
            <person name="Bryant D.A."/>
            <person name="Richardson P."/>
        </authorList>
    </citation>
    <scope>NUCLEOTIDE SEQUENCE [LARGE SCALE GENOMIC DNA]</scope>
    <source>
        <strain>RS-1</strain>
    </source>
</reference>
<sequence length="100" mass="10981">MNPRQLEQMARQMQKEMMRIQEELANTTVEGTAGSYVTVTMNGHREIKSIKLAPEVVDPDDVETLQDLIVAAIADASKKAQELAEQRLGPLAGGMKLPGF</sequence>
<organism>
    <name type="scientific">Roseiflexus sp. (strain RS-1)</name>
    <dbReference type="NCBI Taxonomy" id="357808"/>
    <lineage>
        <taxon>Bacteria</taxon>
        <taxon>Bacillati</taxon>
        <taxon>Chloroflexota</taxon>
        <taxon>Chloroflexia</taxon>
        <taxon>Chloroflexales</taxon>
        <taxon>Roseiflexineae</taxon>
        <taxon>Roseiflexaceae</taxon>
        <taxon>Roseiflexus</taxon>
    </lineage>
</organism>
<keyword id="KW-0963">Cytoplasm</keyword>
<keyword id="KW-0238">DNA-binding</keyword>
<accession>A5UTH4</accession>
<evidence type="ECO:0000255" key="1">
    <source>
        <dbReference type="HAMAP-Rule" id="MF_00274"/>
    </source>
</evidence>
<gene>
    <name type="ordered locus">RoseRS_1534</name>
</gene>
<proteinExistence type="inferred from homology"/>
<name>Y1534_ROSS1</name>
<comment type="function">
    <text evidence="1">Binds to DNA and alters its conformation. May be involved in regulation of gene expression, nucleoid organization and DNA protection.</text>
</comment>
<comment type="subunit">
    <text evidence="1">Homodimer.</text>
</comment>
<comment type="subcellular location">
    <subcellularLocation>
        <location evidence="1">Cytoplasm</location>
        <location evidence="1">Nucleoid</location>
    </subcellularLocation>
</comment>
<comment type="similarity">
    <text evidence="1">Belongs to the YbaB/EbfC family.</text>
</comment>
<dbReference type="EMBL" id="CP000686">
    <property type="protein sequence ID" value="ABQ89927.1"/>
    <property type="molecule type" value="Genomic_DNA"/>
</dbReference>
<dbReference type="RefSeq" id="WP_011956276.1">
    <property type="nucleotide sequence ID" value="NC_009523.1"/>
</dbReference>
<dbReference type="SMR" id="A5UTH4"/>
<dbReference type="STRING" id="357808.RoseRS_1534"/>
<dbReference type="KEGG" id="rrs:RoseRS_1534"/>
<dbReference type="eggNOG" id="COG0718">
    <property type="taxonomic scope" value="Bacteria"/>
</dbReference>
<dbReference type="HOGENOM" id="CLU_140930_1_0_0"/>
<dbReference type="OrthoDB" id="9795263at2"/>
<dbReference type="Proteomes" id="UP000006554">
    <property type="component" value="Chromosome"/>
</dbReference>
<dbReference type="GO" id="GO:0043590">
    <property type="term" value="C:bacterial nucleoid"/>
    <property type="evidence" value="ECO:0007669"/>
    <property type="project" value="UniProtKB-UniRule"/>
</dbReference>
<dbReference type="GO" id="GO:0005829">
    <property type="term" value="C:cytosol"/>
    <property type="evidence" value="ECO:0007669"/>
    <property type="project" value="TreeGrafter"/>
</dbReference>
<dbReference type="GO" id="GO:0003677">
    <property type="term" value="F:DNA binding"/>
    <property type="evidence" value="ECO:0007669"/>
    <property type="project" value="UniProtKB-UniRule"/>
</dbReference>
<dbReference type="Gene3D" id="3.30.1310.10">
    <property type="entry name" value="Nucleoid-associated protein YbaB-like domain"/>
    <property type="match status" value="1"/>
</dbReference>
<dbReference type="HAMAP" id="MF_00274">
    <property type="entry name" value="DNA_YbaB_EbfC"/>
    <property type="match status" value="1"/>
</dbReference>
<dbReference type="InterPro" id="IPR036894">
    <property type="entry name" value="YbaB-like_sf"/>
</dbReference>
<dbReference type="InterPro" id="IPR004401">
    <property type="entry name" value="YbaB/EbfC"/>
</dbReference>
<dbReference type="NCBIfam" id="TIGR00103">
    <property type="entry name" value="DNA_YbaB_EbfC"/>
    <property type="match status" value="1"/>
</dbReference>
<dbReference type="PANTHER" id="PTHR33449">
    <property type="entry name" value="NUCLEOID-ASSOCIATED PROTEIN YBAB"/>
    <property type="match status" value="1"/>
</dbReference>
<dbReference type="PANTHER" id="PTHR33449:SF1">
    <property type="entry name" value="NUCLEOID-ASSOCIATED PROTEIN YBAB"/>
    <property type="match status" value="1"/>
</dbReference>
<dbReference type="Pfam" id="PF02575">
    <property type="entry name" value="YbaB_DNA_bd"/>
    <property type="match status" value="1"/>
</dbReference>
<dbReference type="PIRSF" id="PIRSF004555">
    <property type="entry name" value="UCP004555"/>
    <property type="match status" value="1"/>
</dbReference>
<dbReference type="SUPFAM" id="SSF82607">
    <property type="entry name" value="YbaB-like"/>
    <property type="match status" value="1"/>
</dbReference>
<protein>
    <recommendedName>
        <fullName evidence="1">Nucleoid-associated protein RoseRS_1534</fullName>
    </recommendedName>
</protein>
<feature type="chain" id="PRO_1000059205" description="Nucleoid-associated protein RoseRS_1534">
    <location>
        <begin position="1"/>
        <end position="100"/>
    </location>
</feature>